<name>MIAA_LEPBJ</name>
<feature type="chain" id="PRO_0000377204" description="tRNA dimethylallyltransferase">
    <location>
        <begin position="1"/>
        <end position="292"/>
    </location>
</feature>
<feature type="region of interest" description="Interaction with substrate tRNA" evidence="1">
    <location>
        <begin position="29"/>
        <end position="32"/>
    </location>
</feature>
<feature type="binding site" evidence="1">
    <location>
        <begin position="5"/>
        <end position="12"/>
    </location>
    <ligand>
        <name>ATP</name>
        <dbReference type="ChEBI" id="CHEBI:30616"/>
    </ligand>
</feature>
<feature type="binding site" evidence="1">
    <location>
        <begin position="7"/>
        <end position="12"/>
    </location>
    <ligand>
        <name>substrate</name>
    </ligand>
</feature>
<feature type="site" description="Interaction with substrate tRNA" evidence="1">
    <location>
        <position position="95"/>
    </location>
</feature>
<dbReference type="EC" id="2.5.1.75" evidence="1"/>
<dbReference type="EMBL" id="CP000350">
    <property type="protein sequence ID" value="ABJ76254.1"/>
    <property type="molecule type" value="Genomic_DNA"/>
</dbReference>
<dbReference type="SMR" id="Q04S66"/>
<dbReference type="KEGG" id="lbj:LBJ_1703"/>
<dbReference type="HOGENOM" id="CLU_032616_0_1_12"/>
<dbReference type="Proteomes" id="UP000000656">
    <property type="component" value="Chromosome 1"/>
</dbReference>
<dbReference type="GO" id="GO:0005524">
    <property type="term" value="F:ATP binding"/>
    <property type="evidence" value="ECO:0007669"/>
    <property type="project" value="UniProtKB-UniRule"/>
</dbReference>
<dbReference type="GO" id="GO:0052381">
    <property type="term" value="F:tRNA dimethylallyltransferase activity"/>
    <property type="evidence" value="ECO:0007669"/>
    <property type="project" value="UniProtKB-UniRule"/>
</dbReference>
<dbReference type="GO" id="GO:0006400">
    <property type="term" value="P:tRNA modification"/>
    <property type="evidence" value="ECO:0007669"/>
    <property type="project" value="TreeGrafter"/>
</dbReference>
<dbReference type="Gene3D" id="1.10.20.140">
    <property type="match status" value="1"/>
</dbReference>
<dbReference type="Gene3D" id="3.40.50.300">
    <property type="entry name" value="P-loop containing nucleotide triphosphate hydrolases"/>
    <property type="match status" value="1"/>
</dbReference>
<dbReference type="HAMAP" id="MF_00185">
    <property type="entry name" value="IPP_trans"/>
    <property type="match status" value="1"/>
</dbReference>
<dbReference type="InterPro" id="IPR039657">
    <property type="entry name" value="Dimethylallyltransferase"/>
</dbReference>
<dbReference type="InterPro" id="IPR018022">
    <property type="entry name" value="IPT"/>
</dbReference>
<dbReference type="InterPro" id="IPR027417">
    <property type="entry name" value="P-loop_NTPase"/>
</dbReference>
<dbReference type="NCBIfam" id="TIGR00174">
    <property type="entry name" value="miaA"/>
    <property type="match status" value="1"/>
</dbReference>
<dbReference type="PANTHER" id="PTHR11088">
    <property type="entry name" value="TRNA DIMETHYLALLYLTRANSFERASE"/>
    <property type="match status" value="1"/>
</dbReference>
<dbReference type="PANTHER" id="PTHR11088:SF60">
    <property type="entry name" value="TRNA DIMETHYLALLYLTRANSFERASE"/>
    <property type="match status" value="1"/>
</dbReference>
<dbReference type="Pfam" id="PF01715">
    <property type="entry name" value="IPPT"/>
    <property type="match status" value="1"/>
</dbReference>
<dbReference type="SUPFAM" id="SSF52540">
    <property type="entry name" value="P-loop containing nucleoside triphosphate hydrolases"/>
    <property type="match status" value="1"/>
</dbReference>
<accession>Q04S66</accession>
<proteinExistence type="inferred from homology"/>
<sequence length="292" mass="33394">MILAAPTGAGKTSLVTELDPTRFEILSFDSRQIYKNMSIGTAAPTKKEQSKIAHHLVEVLSPSEAVDAGLYNRLAEEALQKVLNLDKIPVFTAGTGFYLKAFLFGMFPVPEIDVSVRDRVLSMSKEEKKNLLKELDPNALDKIFPEDDYRLGRALEVNLMGEKWSRLKIDPNTSAICRYDLDIRLGVFLDLDRKELYERINLRAKQMIEKGMADEAWKIQERFGETCPGLKSLGYNFALENKKGNSNLETFLADLSRSHRNYAKRQVTWFRKEPYVQPMGRSEALERIKHMK</sequence>
<reference key="1">
    <citation type="journal article" date="2006" name="Proc. Natl. Acad. Sci. U.S.A.">
        <title>Genome reduction in Leptospira borgpetersenii reflects limited transmission potential.</title>
        <authorList>
            <person name="Bulach D.M."/>
            <person name="Zuerner R.L."/>
            <person name="Wilson P."/>
            <person name="Seemann T."/>
            <person name="McGrath A."/>
            <person name="Cullen P.A."/>
            <person name="Davis J."/>
            <person name="Johnson M."/>
            <person name="Kuczek E."/>
            <person name="Alt D.P."/>
            <person name="Peterson-Burch B."/>
            <person name="Coppel R.L."/>
            <person name="Rood J.I."/>
            <person name="Davies J.K."/>
            <person name="Adler B."/>
        </authorList>
    </citation>
    <scope>NUCLEOTIDE SEQUENCE [LARGE SCALE GENOMIC DNA]</scope>
    <source>
        <strain>JB197</strain>
    </source>
</reference>
<gene>
    <name evidence="1" type="primary">miaA</name>
    <name type="ordered locus">LBJ_1703</name>
</gene>
<evidence type="ECO:0000255" key="1">
    <source>
        <dbReference type="HAMAP-Rule" id="MF_00185"/>
    </source>
</evidence>
<protein>
    <recommendedName>
        <fullName evidence="1">tRNA dimethylallyltransferase</fullName>
        <ecNumber evidence="1">2.5.1.75</ecNumber>
    </recommendedName>
    <alternativeName>
        <fullName evidence="1">Dimethylallyl diphosphate:tRNA dimethylallyltransferase</fullName>
        <shortName evidence="1">DMAPP:tRNA dimethylallyltransferase</shortName>
        <shortName evidence="1">DMATase</shortName>
    </alternativeName>
    <alternativeName>
        <fullName evidence="1">Isopentenyl-diphosphate:tRNA isopentenyltransferase</fullName>
        <shortName evidence="1">IPP transferase</shortName>
        <shortName evidence="1">IPPT</shortName>
        <shortName evidence="1">IPTase</shortName>
    </alternativeName>
</protein>
<comment type="function">
    <text evidence="1">Catalyzes the transfer of a dimethylallyl group onto the adenine at position 37 in tRNAs that read codons beginning with uridine, leading to the formation of N6-(dimethylallyl)adenosine (i(6)A).</text>
</comment>
<comment type="catalytic activity">
    <reaction evidence="1">
        <text>adenosine(37) in tRNA + dimethylallyl diphosphate = N(6)-dimethylallyladenosine(37) in tRNA + diphosphate</text>
        <dbReference type="Rhea" id="RHEA:26482"/>
        <dbReference type="Rhea" id="RHEA-COMP:10162"/>
        <dbReference type="Rhea" id="RHEA-COMP:10375"/>
        <dbReference type="ChEBI" id="CHEBI:33019"/>
        <dbReference type="ChEBI" id="CHEBI:57623"/>
        <dbReference type="ChEBI" id="CHEBI:74411"/>
        <dbReference type="ChEBI" id="CHEBI:74415"/>
        <dbReference type="EC" id="2.5.1.75"/>
    </reaction>
</comment>
<comment type="cofactor">
    <cofactor evidence="1">
        <name>Mg(2+)</name>
        <dbReference type="ChEBI" id="CHEBI:18420"/>
    </cofactor>
</comment>
<comment type="subunit">
    <text evidence="1">Monomer.</text>
</comment>
<comment type="similarity">
    <text evidence="1">Belongs to the IPP transferase family.</text>
</comment>
<keyword id="KW-0067">ATP-binding</keyword>
<keyword id="KW-0460">Magnesium</keyword>
<keyword id="KW-0547">Nucleotide-binding</keyword>
<keyword id="KW-0808">Transferase</keyword>
<keyword id="KW-0819">tRNA processing</keyword>
<organism>
    <name type="scientific">Leptospira borgpetersenii serovar Hardjo-bovis (strain JB197)</name>
    <dbReference type="NCBI Taxonomy" id="355277"/>
    <lineage>
        <taxon>Bacteria</taxon>
        <taxon>Pseudomonadati</taxon>
        <taxon>Spirochaetota</taxon>
        <taxon>Spirochaetia</taxon>
        <taxon>Leptospirales</taxon>
        <taxon>Leptospiraceae</taxon>
        <taxon>Leptospira</taxon>
    </lineage>
</organism>